<comment type="function">
    <text evidence="5 8 9">Receptor for interleukin-2. This beta subunit is involved in receptor mediated endocytosis and transduces the mitogenic signals of IL2. Probably in association with IL15RA, involved in the stimulation of neutrophil phagocytosis by IL15 (PubMed:15123770, PubMed:31040185).</text>
</comment>
<comment type="subunit">
    <text evidence="4 6 7">Non-covalent dimer of an alpha and a beta subunit. IL2R exists in 3 different forms: a high affinity dimer, an intermediate affinity monomer (beta subunit), and a low affinity monomer (alpha subunit). The high and intermediate affinity forms also associate with a gamma subunit. Interacts with SHB upon interleukin stimulation.</text>
</comment>
<comment type="subunit">
    <text evidence="10">(Microbial infection) Interacts with HTLV-1 accessory protein p12I.</text>
</comment>
<comment type="interaction">
    <interactant intactId="EBI-2866779">
        <id>P14784</id>
    </interactant>
    <interactant intactId="EBI-980274">
        <id>P40933</id>
        <label>IL15</label>
    </interactant>
    <organismsDiffer>false</organismsDiffer>
    <experiments>3</experiments>
</comment>
<comment type="interaction">
    <interactant intactId="EBI-2866779">
        <id>P14784</id>
    </interactant>
    <interactant intactId="EBI-12508717">
        <id>P60568</id>
        <label>IL2</label>
    </interactant>
    <organismsDiffer>false</organismsDiffer>
    <experiments>5</experiments>
</comment>
<comment type="interaction">
    <interactant intactId="EBI-2866779">
        <id>P14784</id>
    </interactant>
    <interactant intactId="EBI-358993">
        <id>Q15645</id>
        <label>TRIP13</label>
    </interactant>
    <organismsDiffer>false</organismsDiffer>
    <experiments>3</experiments>
</comment>
<comment type="subcellular location">
    <subcellularLocation>
        <location evidence="5 8 9">Cell membrane</location>
        <topology evidence="1">Single-pass type I membrane protein</topology>
    </subcellularLocation>
</comment>
<comment type="domain">
    <text>The WSXWS motif appears to be necessary for proper protein folding and thereby efficient intracellular transport and cell-surface receptor binding.</text>
</comment>
<comment type="domain">
    <text>The box 1 motif is required for JAK interaction and/or activation.</text>
</comment>
<comment type="disease" evidence="8 9">
    <disease id="DI-05611">
        <name>Immunodeficiency 63 with lymphoproliferation and autoimmunity</name>
        <acronym>IMD63</acronym>
        <description>An autosomal recessive disorder characterized by immune dysregulation resulting in lymphoid proliferation, dermatitis, enteropathy, autoantibodies, hypergammaglobulinemia, and immunodeficiency with recurrent infections. Patients show increased susceptibility to viral infections, particularly cytomegalovirus disease.</description>
        <dbReference type="MIM" id="618495"/>
    </disease>
    <text>The disease is caused by variants affecting the gene represented in this entry.</text>
</comment>
<comment type="similarity">
    <text evidence="12">Belongs to the type I cytokine receptor family. Type 4 subfamily.</text>
</comment>
<proteinExistence type="evidence at protein level"/>
<protein>
    <recommendedName>
        <fullName>Interleukin-2 receptor subunit beta</fullName>
        <shortName>IL-2 receptor subunit beta</shortName>
        <shortName>IL-2R subunit beta</shortName>
        <shortName>IL-2RB</shortName>
    </recommendedName>
    <alternativeName>
        <fullName>High affinity IL-2 receptor subunit beta</fullName>
    </alternativeName>
    <alternativeName>
        <fullName evidence="13">Interleukin-15 receptor subunit beta</fullName>
    </alternativeName>
    <alternativeName>
        <fullName>p70-75</fullName>
        <shortName>p75</shortName>
    </alternativeName>
    <cdAntigenName>CD122</cdAntigenName>
</protein>
<reference key="1">
    <citation type="journal article" date="1989" name="Science">
        <title>Interleukin-2 receptor beta chain gene: generation of three receptor forms by cloned human alpha and beta chain cDNA's.</title>
        <authorList>
            <person name="Hatakeyama M."/>
            <person name="Tsudo M."/>
            <person name="Minamoto S."/>
            <person name="Kono T."/>
            <person name="Doi T."/>
            <person name="Miyata T."/>
            <person name="Miyasaka M."/>
            <person name="Taniguchi T."/>
        </authorList>
    </citation>
    <scope>NUCLEOTIDE SEQUENCE [MRNA]</scope>
</reference>
<reference key="2">
    <citation type="journal article" date="2004" name="Genome Biol.">
        <title>A genome annotation-driven approach to cloning the human ORFeome.</title>
        <authorList>
            <person name="Collins J.E."/>
            <person name="Wright C.L."/>
            <person name="Edwards C.A."/>
            <person name="Davis M.P."/>
            <person name="Grinham J.A."/>
            <person name="Cole C.G."/>
            <person name="Goward M.E."/>
            <person name="Aguado B."/>
            <person name="Mallya M."/>
            <person name="Mokrab Y."/>
            <person name="Huckle E.J."/>
            <person name="Beare D.M."/>
            <person name="Dunham I."/>
        </authorList>
    </citation>
    <scope>NUCLEOTIDE SEQUENCE [LARGE SCALE MRNA]</scope>
</reference>
<reference key="3">
    <citation type="submission" date="2002-06" db="EMBL/GenBank/DDBJ databases">
        <authorList>
            <consortium name="SeattleSNPs variation discovery resource"/>
        </authorList>
    </citation>
    <scope>NUCLEOTIDE SEQUENCE [GENOMIC DNA]</scope>
    <scope>VARIANTS PHE-83 AND GLU-391</scope>
</reference>
<reference key="4">
    <citation type="journal article" date="2004" name="Nat. Genet.">
        <title>Complete sequencing and characterization of 21,243 full-length human cDNAs.</title>
        <authorList>
            <person name="Ota T."/>
            <person name="Suzuki Y."/>
            <person name="Nishikawa T."/>
            <person name="Otsuki T."/>
            <person name="Sugiyama T."/>
            <person name="Irie R."/>
            <person name="Wakamatsu A."/>
            <person name="Hayashi K."/>
            <person name="Sato H."/>
            <person name="Nagai K."/>
            <person name="Kimura K."/>
            <person name="Makita H."/>
            <person name="Sekine M."/>
            <person name="Obayashi M."/>
            <person name="Nishi T."/>
            <person name="Shibahara T."/>
            <person name="Tanaka T."/>
            <person name="Ishii S."/>
            <person name="Yamamoto J."/>
            <person name="Saito K."/>
            <person name="Kawai Y."/>
            <person name="Isono Y."/>
            <person name="Nakamura Y."/>
            <person name="Nagahari K."/>
            <person name="Murakami K."/>
            <person name="Yasuda T."/>
            <person name="Iwayanagi T."/>
            <person name="Wagatsuma M."/>
            <person name="Shiratori A."/>
            <person name="Sudo H."/>
            <person name="Hosoiri T."/>
            <person name="Kaku Y."/>
            <person name="Kodaira H."/>
            <person name="Kondo H."/>
            <person name="Sugawara M."/>
            <person name="Takahashi M."/>
            <person name="Kanda K."/>
            <person name="Yokoi T."/>
            <person name="Furuya T."/>
            <person name="Kikkawa E."/>
            <person name="Omura Y."/>
            <person name="Abe K."/>
            <person name="Kamihara K."/>
            <person name="Katsuta N."/>
            <person name="Sato K."/>
            <person name="Tanikawa M."/>
            <person name="Yamazaki M."/>
            <person name="Ninomiya K."/>
            <person name="Ishibashi T."/>
            <person name="Yamashita H."/>
            <person name="Murakawa K."/>
            <person name="Fujimori K."/>
            <person name="Tanai H."/>
            <person name="Kimata M."/>
            <person name="Watanabe M."/>
            <person name="Hiraoka S."/>
            <person name="Chiba Y."/>
            <person name="Ishida S."/>
            <person name="Ono Y."/>
            <person name="Takiguchi S."/>
            <person name="Watanabe S."/>
            <person name="Yosida M."/>
            <person name="Hotuta T."/>
            <person name="Kusano J."/>
            <person name="Kanehori K."/>
            <person name="Takahashi-Fujii A."/>
            <person name="Hara H."/>
            <person name="Tanase T.-O."/>
            <person name="Nomura Y."/>
            <person name="Togiya S."/>
            <person name="Komai F."/>
            <person name="Hara R."/>
            <person name="Takeuchi K."/>
            <person name="Arita M."/>
            <person name="Imose N."/>
            <person name="Musashino K."/>
            <person name="Yuuki H."/>
            <person name="Oshima A."/>
            <person name="Sasaki N."/>
            <person name="Aotsuka S."/>
            <person name="Yoshikawa Y."/>
            <person name="Matsunawa H."/>
            <person name="Ichihara T."/>
            <person name="Shiohata N."/>
            <person name="Sano S."/>
            <person name="Moriya S."/>
            <person name="Momiyama H."/>
            <person name="Satoh N."/>
            <person name="Takami S."/>
            <person name="Terashima Y."/>
            <person name="Suzuki O."/>
            <person name="Nakagawa S."/>
            <person name="Senoh A."/>
            <person name="Mizoguchi H."/>
            <person name="Goto Y."/>
            <person name="Shimizu F."/>
            <person name="Wakebe H."/>
            <person name="Hishigaki H."/>
            <person name="Watanabe T."/>
            <person name="Sugiyama A."/>
            <person name="Takemoto M."/>
            <person name="Kawakami B."/>
            <person name="Yamazaki M."/>
            <person name="Watanabe K."/>
            <person name="Kumagai A."/>
            <person name="Itakura S."/>
            <person name="Fukuzumi Y."/>
            <person name="Fujimori Y."/>
            <person name="Komiyama M."/>
            <person name="Tashiro H."/>
            <person name="Tanigami A."/>
            <person name="Fujiwara T."/>
            <person name="Ono T."/>
            <person name="Yamada K."/>
            <person name="Fujii Y."/>
            <person name="Ozaki K."/>
            <person name="Hirao M."/>
            <person name="Ohmori Y."/>
            <person name="Kawabata A."/>
            <person name="Hikiji T."/>
            <person name="Kobatake N."/>
            <person name="Inagaki H."/>
            <person name="Ikema Y."/>
            <person name="Okamoto S."/>
            <person name="Okitani R."/>
            <person name="Kawakami T."/>
            <person name="Noguchi S."/>
            <person name="Itoh T."/>
            <person name="Shigeta K."/>
            <person name="Senba T."/>
            <person name="Matsumura K."/>
            <person name="Nakajima Y."/>
            <person name="Mizuno T."/>
            <person name="Morinaga M."/>
            <person name="Sasaki M."/>
            <person name="Togashi T."/>
            <person name="Oyama M."/>
            <person name="Hata H."/>
            <person name="Watanabe M."/>
            <person name="Komatsu T."/>
            <person name="Mizushima-Sugano J."/>
            <person name="Satoh T."/>
            <person name="Shirai Y."/>
            <person name="Takahashi Y."/>
            <person name="Nakagawa K."/>
            <person name="Okumura K."/>
            <person name="Nagase T."/>
            <person name="Nomura N."/>
            <person name="Kikuchi H."/>
            <person name="Masuho Y."/>
            <person name="Yamashita R."/>
            <person name="Nakai K."/>
            <person name="Yada T."/>
            <person name="Nakamura Y."/>
            <person name="Ohara O."/>
            <person name="Isogai T."/>
            <person name="Sugano S."/>
        </authorList>
    </citation>
    <scope>NUCLEOTIDE SEQUENCE [LARGE SCALE MRNA]</scope>
    <source>
        <tissue>Trachea</tissue>
    </source>
</reference>
<reference key="5">
    <citation type="journal article" date="1999" name="Nature">
        <title>The DNA sequence of human chromosome 22.</title>
        <authorList>
            <person name="Dunham I."/>
            <person name="Hunt A.R."/>
            <person name="Collins J.E."/>
            <person name="Bruskiewich R."/>
            <person name="Beare D.M."/>
            <person name="Clamp M."/>
            <person name="Smink L.J."/>
            <person name="Ainscough R."/>
            <person name="Almeida J.P."/>
            <person name="Babbage A.K."/>
            <person name="Bagguley C."/>
            <person name="Bailey J."/>
            <person name="Barlow K.F."/>
            <person name="Bates K.N."/>
            <person name="Beasley O.P."/>
            <person name="Bird C.P."/>
            <person name="Blakey S.E."/>
            <person name="Bridgeman A.M."/>
            <person name="Buck D."/>
            <person name="Burgess J."/>
            <person name="Burrill W.D."/>
            <person name="Burton J."/>
            <person name="Carder C."/>
            <person name="Carter N.P."/>
            <person name="Chen Y."/>
            <person name="Clark G."/>
            <person name="Clegg S.M."/>
            <person name="Cobley V.E."/>
            <person name="Cole C.G."/>
            <person name="Collier R.E."/>
            <person name="Connor R."/>
            <person name="Conroy D."/>
            <person name="Corby N.R."/>
            <person name="Coville G.J."/>
            <person name="Cox A.V."/>
            <person name="Davis J."/>
            <person name="Dawson E."/>
            <person name="Dhami P.D."/>
            <person name="Dockree C."/>
            <person name="Dodsworth S.J."/>
            <person name="Durbin R.M."/>
            <person name="Ellington A.G."/>
            <person name="Evans K.L."/>
            <person name="Fey J.M."/>
            <person name="Fleming K."/>
            <person name="French L."/>
            <person name="Garner A.A."/>
            <person name="Gilbert J.G.R."/>
            <person name="Goward M.E."/>
            <person name="Grafham D.V."/>
            <person name="Griffiths M.N.D."/>
            <person name="Hall C."/>
            <person name="Hall R.E."/>
            <person name="Hall-Tamlyn G."/>
            <person name="Heathcott R.W."/>
            <person name="Ho S."/>
            <person name="Holmes S."/>
            <person name="Hunt S.E."/>
            <person name="Jones M.C."/>
            <person name="Kershaw J."/>
            <person name="Kimberley A.M."/>
            <person name="King A."/>
            <person name="Laird G.K."/>
            <person name="Langford C.F."/>
            <person name="Leversha M.A."/>
            <person name="Lloyd C."/>
            <person name="Lloyd D.M."/>
            <person name="Martyn I.D."/>
            <person name="Mashreghi-Mohammadi M."/>
            <person name="Matthews L.H."/>
            <person name="Mccann O.T."/>
            <person name="Mcclay J."/>
            <person name="Mclaren S."/>
            <person name="McMurray A.A."/>
            <person name="Milne S.A."/>
            <person name="Mortimore B.J."/>
            <person name="Odell C.N."/>
            <person name="Pavitt R."/>
            <person name="Pearce A.V."/>
            <person name="Pearson D."/>
            <person name="Phillimore B.J.C.T."/>
            <person name="Phillips S.H."/>
            <person name="Plumb R.W."/>
            <person name="Ramsay H."/>
            <person name="Ramsey Y."/>
            <person name="Rogers L."/>
            <person name="Ross M.T."/>
            <person name="Scott C.E."/>
            <person name="Sehra H.K."/>
            <person name="Skuce C.D."/>
            <person name="Smalley S."/>
            <person name="Smith M.L."/>
            <person name="Soderlund C."/>
            <person name="Spragon L."/>
            <person name="Steward C.A."/>
            <person name="Sulston J.E."/>
            <person name="Swann R.M."/>
            <person name="Vaudin M."/>
            <person name="Wall M."/>
            <person name="Wallis J.M."/>
            <person name="Whiteley M.N."/>
            <person name="Willey D.L."/>
            <person name="Williams L."/>
            <person name="Williams S.A."/>
            <person name="Williamson H."/>
            <person name="Wilmer T.E."/>
            <person name="Wilming L."/>
            <person name="Wright C.L."/>
            <person name="Hubbard T."/>
            <person name="Bentley D.R."/>
            <person name="Beck S."/>
            <person name="Rogers J."/>
            <person name="Shimizu N."/>
            <person name="Minoshima S."/>
            <person name="Kawasaki K."/>
            <person name="Sasaki T."/>
            <person name="Asakawa S."/>
            <person name="Kudoh J."/>
            <person name="Shintani A."/>
            <person name="Shibuya K."/>
            <person name="Yoshizaki Y."/>
            <person name="Aoki N."/>
            <person name="Mitsuyama S."/>
            <person name="Roe B.A."/>
            <person name="Chen F."/>
            <person name="Chu L."/>
            <person name="Crabtree J."/>
            <person name="Deschamps S."/>
            <person name="Do A."/>
            <person name="Do T."/>
            <person name="Dorman A."/>
            <person name="Fang F."/>
            <person name="Fu Y."/>
            <person name="Hu P."/>
            <person name="Hua A."/>
            <person name="Kenton S."/>
            <person name="Lai H."/>
            <person name="Lao H.I."/>
            <person name="Lewis J."/>
            <person name="Lewis S."/>
            <person name="Lin S.-P."/>
            <person name="Loh P."/>
            <person name="Malaj E."/>
            <person name="Nguyen T."/>
            <person name="Pan H."/>
            <person name="Phan S."/>
            <person name="Qi S."/>
            <person name="Qian Y."/>
            <person name="Ray L."/>
            <person name="Ren Q."/>
            <person name="Shaull S."/>
            <person name="Sloan D."/>
            <person name="Song L."/>
            <person name="Wang Q."/>
            <person name="Wang Y."/>
            <person name="Wang Z."/>
            <person name="White J."/>
            <person name="Willingham D."/>
            <person name="Wu H."/>
            <person name="Yao Z."/>
            <person name="Zhan M."/>
            <person name="Zhang G."/>
            <person name="Chissoe S."/>
            <person name="Murray J."/>
            <person name="Miller N."/>
            <person name="Minx P."/>
            <person name="Fulton R."/>
            <person name="Johnson D."/>
            <person name="Bemis G."/>
            <person name="Bentley D."/>
            <person name="Bradshaw H."/>
            <person name="Bourne S."/>
            <person name="Cordes M."/>
            <person name="Du Z."/>
            <person name="Fulton L."/>
            <person name="Goela D."/>
            <person name="Graves T."/>
            <person name="Hawkins J."/>
            <person name="Hinds K."/>
            <person name="Kemp K."/>
            <person name="Latreille P."/>
            <person name="Layman D."/>
            <person name="Ozersky P."/>
            <person name="Rohlfing T."/>
            <person name="Scheet P."/>
            <person name="Walker C."/>
            <person name="Wamsley A."/>
            <person name="Wohldmann P."/>
            <person name="Pepin K."/>
            <person name="Nelson J."/>
            <person name="Korf I."/>
            <person name="Bedell J.A."/>
            <person name="Hillier L.W."/>
            <person name="Mardis E."/>
            <person name="Waterston R."/>
            <person name="Wilson R."/>
            <person name="Emanuel B.S."/>
            <person name="Shaikh T."/>
            <person name="Kurahashi H."/>
            <person name="Saitta S."/>
            <person name="Budarf M.L."/>
            <person name="McDermid H.E."/>
            <person name="Johnson A."/>
            <person name="Wong A.C.C."/>
            <person name="Morrow B.E."/>
            <person name="Edelmann L."/>
            <person name="Kim U.J."/>
            <person name="Shizuya H."/>
            <person name="Simon M.I."/>
            <person name="Dumanski J.P."/>
            <person name="Peyrard M."/>
            <person name="Kedra D."/>
            <person name="Seroussi E."/>
            <person name="Fransson I."/>
            <person name="Tapia I."/>
            <person name="Bruder C.E."/>
            <person name="O'Brien K.P."/>
            <person name="Wilkinson P."/>
            <person name="Bodenteich A."/>
            <person name="Hartman K."/>
            <person name="Hu X."/>
            <person name="Khan A.S."/>
            <person name="Lane L."/>
            <person name="Tilahun Y."/>
            <person name="Wright H."/>
        </authorList>
    </citation>
    <scope>NUCLEOTIDE SEQUENCE [LARGE SCALE GENOMIC DNA]</scope>
</reference>
<reference key="6">
    <citation type="submission" date="2005-07" db="EMBL/GenBank/DDBJ databases">
        <authorList>
            <person name="Mural R.J."/>
            <person name="Istrail S."/>
            <person name="Sutton G.G."/>
            <person name="Florea L."/>
            <person name="Halpern A.L."/>
            <person name="Mobarry C.M."/>
            <person name="Lippert R."/>
            <person name="Walenz B."/>
            <person name="Shatkay H."/>
            <person name="Dew I."/>
            <person name="Miller J.R."/>
            <person name="Flanigan M.J."/>
            <person name="Edwards N.J."/>
            <person name="Bolanos R."/>
            <person name="Fasulo D."/>
            <person name="Halldorsson B.V."/>
            <person name="Hannenhalli S."/>
            <person name="Turner R."/>
            <person name="Yooseph S."/>
            <person name="Lu F."/>
            <person name="Nusskern D.R."/>
            <person name="Shue B.C."/>
            <person name="Zheng X.H."/>
            <person name="Zhong F."/>
            <person name="Delcher A.L."/>
            <person name="Huson D.H."/>
            <person name="Kravitz S.A."/>
            <person name="Mouchard L."/>
            <person name="Reinert K."/>
            <person name="Remington K.A."/>
            <person name="Clark A.G."/>
            <person name="Waterman M.S."/>
            <person name="Eichler E.E."/>
            <person name="Adams M.D."/>
            <person name="Hunkapiller M.W."/>
            <person name="Myers E.W."/>
            <person name="Venter J.C."/>
        </authorList>
    </citation>
    <scope>NUCLEOTIDE SEQUENCE [LARGE SCALE GENOMIC DNA]</scope>
</reference>
<reference key="7">
    <citation type="journal article" date="2004" name="Genome Res.">
        <title>The status, quality, and expansion of the NIH full-length cDNA project: the Mammalian Gene Collection (MGC).</title>
        <authorList>
            <consortium name="The MGC Project Team"/>
        </authorList>
    </citation>
    <scope>NUCLEOTIDE SEQUENCE [LARGE SCALE MRNA]</scope>
    <source>
        <tissue>Lung</tissue>
    </source>
</reference>
<reference key="8">
    <citation type="journal article" date="1996" name="J. Virol.">
        <title>The human T-cell leukemia/lymphotropic virus type 1 p12I proteins bind the interleukin-2 receptor beta and gammac chains and affects their expression on the cell surface.</title>
        <authorList>
            <person name="Mulloy J.C."/>
            <person name="Crownley R.W."/>
            <person name="Fullen J."/>
            <person name="Leonard W.J."/>
            <person name="Franchini G."/>
        </authorList>
    </citation>
    <scope>INTERACTION WITH HTLV-1 ACCESSORY PROTEIN P12I (MICROBIAL INFECTION)</scope>
</reference>
<reference key="9">
    <citation type="journal article" date="2002" name="Biochem. Biophys. Res. Commun.">
        <title>IL-2 receptor signaling through the Shb adapter protein in T and NK cells.</title>
        <authorList>
            <person name="Lindholm C.K."/>
        </authorList>
    </citation>
    <scope>INTERACTION WITH SHB</scope>
    <scope>MUTAGENESIS OF TYR-418 AND TYR-536</scope>
</reference>
<reference key="10">
    <citation type="journal article" date="2004" name="J. Leukoc. Biol.">
        <title>Interleukin-15 enhances human neutrophil phagocytosis by a Syk-dependent mechanism: importance of the IL-15Ralpha chain.</title>
        <authorList>
            <person name="Ratthe C."/>
            <person name="Girard D."/>
        </authorList>
    </citation>
    <scope>FUNCTION</scope>
    <scope>SUBCELLULAR LOCATION</scope>
</reference>
<reference key="11">
    <citation type="journal article" date="1994" name="Structure">
        <title>The interleukin-2 and interleukin-4 receptors studied by molecular modelling.</title>
        <authorList>
            <person name="Bamborough P."/>
            <person name="Hedgecock C.J."/>
            <person name="Richards W.G."/>
        </authorList>
    </citation>
    <scope>3D-STRUCTURE MODELING OF 31-230</scope>
</reference>
<reference key="12">
    <citation type="journal article" date="2005" name="Science">
        <title>Structure of the quaternary complex of interleukin-2 with its alpha, beta, and gammac receptors.</title>
        <authorList>
            <person name="Wang X."/>
            <person name="Rickert M."/>
            <person name="Garcia K.C."/>
        </authorList>
    </citation>
    <scope>X-RAY CRYSTALLOGRAPHY (2.3 ANGSTROMS) OF 27-240 IN COMPLEX WITH IL2; IL2RA AND IL2RC</scope>
    <scope>DISULFIDE BONDS</scope>
    <scope>GLYCOSYLATION AT ASN-149</scope>
</reference>
<reference key="13">
    <citation type="journal article" date="2006" name="Proc. Natl. Acad. Sci. U.S.A.">
        <title>Crystal structure of the IL-2 signaling complex: paradigm for a heterotrimeric cytokine receptor.</title>
        <authorList>
            <person name="Stauber D.J."/>
            <person name="Debler E.W."/>
            <person name="Horton P.A."/>
            <person name="Smith K.A."/>
            <person name="Wilson I.A."/>
        </authorList>
    </citation>
    <scope>X-RAY CRYSTALLOGRAPHY (3.0 ANGSTROMS) OF 25-232 IN COMPLEX WITH IL2; IL2RA AND IL2RC</scope>
    <scope>DISULFIDE BONDS</scope>
    <scope>GLYCOSYLATION AT ASN-43; ASN-71 AND ASN-149</scope>
</reference>
<reference key="14">
    <citation type="journal article" date="2019" name="J. Exp. Med.">
        <title>A novel human IL2RB mutation results in T and NK cell-driven immune dysregulation.</title>
        <authorList>
            <person name="Fernandez I.Z."/>
            <person name="Baxter R.M."/>
            <person name="Garcia-Perez J.E."/>
            <person name="Vendrame E."/>
            <person name="Ranganath T."/>
            <person name="Kong D.S."/>
            <person name="Lundquist K."/>
            <person name="Nguyen T."/>
            <person name="Ogolla S."/>
            <person name="Black J."/>
            <person name="Galambos C."/>
            <person name="Gumbart J.C."/>
            <person name="Dawany N."/>
            <person name="Kelsen J.R."/>
            <person name="de Zoeten E.F."/>
            <person name="Quinones R."/>
            <person name="Eissa H."/>
            <person name="Verneris M.R."/>
            <person name="Sullivan K.E."/>
            <person name="Rochford R."/>
            <person name="Blish C.A."/>
            <person name="Kedl R.M."/>
            <person name="Dutmer C.M."/>
            <person name="Hsieh E.W.Y."/>
        </authorList>
    </citation>
    <scope>INVOLVEMENT IN IMD63</scope>
    <scope>VARIANT IMD63 222-PRO--SER-224 DEL</scope>
    <scope>CHARACTERIZATION OF VARIANT IMD63 222-PRO--SER-224 DEL</scope>
    <scope>FUNCTION</scope>
    <scope>SUBCELLULAR LOCATION</scope>
</reference>
<reference key="15">
    <citation type="journal article" date="2019" name="J. Exp. Med.">
        <title>Human interleukin-2 receptor beta mutations associated with defects in immunity and peripheral tolerance.</title>
        <authorList>
            <person name="Zhang Z."/>
            <person name="Gothe F."/>
            <person name="Pennamen P."/>
            <person name="James J.R."/>
            <person name="McDonald D."/>
            <person name="Mata C.P."/>
            <person name="Modis Y."/>
            <person name="Alazami A.M."/>
            <person name="Acres M."/>
            <person name="Haller W."/>
            <person name="Bowen C."/>
            <person name="Doeffinger R."/>
            <person name="Sinclair J."/>
            <person name="Brothers S."/>
            <person name="Zhang Y."/>
            <person name="Matthews H.F."/>
            <person name="Naudion S."/>
            <person name="Pelluard F."/>
            <person name="Alajlan H."/>
            <person name="Yamazaki Y."/>
            <person name="Notarangelo L.D."/>
            <person name="Thaventhiran J.E."/>
            <person name="Engelhardt K.R."/>
            <person name="Al-Mousa H."/>
            <person name="Hambleton S."/>
            <person name="Rooryck C."/>
            <person name="Smith K.G.C."/>
            <person name="Lenardo M.J."/>
        </authorList>
    </citation>
    <scope>INVOLVEMENT IN IMD63</scope>
    <scope>VARIANT IMD63 PRO-77</scope>
    <scope>FUNCTION</scope>
    <scope>SUBCELLULAR LOCATION</scope>
</reference>
<accession>P14784</accession>
<accession>B2R765</accession>
<feature type="signal peptide">
    <location>
        <begin position="1"/>
        <end position="26"/>
    </location>
</feature>
<feature type="chain" id="PRO_0000010878" description="Interleukin-2 receptor subunit beta">
    <location>
        <begin position="27"/>
        <end position="551"/>
    </location>
</feature>
<feature type="topological domain" description="Extracellular" evidence="1">
    <location>
        <begin position="27"/>
        <end position="240"/>
    </location>
</feature>
<feature type="transmembrane region" description="Helical" evidence="1">
    <location>
        <begin position="241"/>
        <end position="265"/>
    </location>
</feature>
<feature type="topological domain" description="Cytoplasmic" evidence="1">
    <location>
        <begin position="266"/>
        <end position="551"/>
    </location>
</feature>
<feature type="domain" description="Fibronectin type-III" evidence="2">
    <location>
        <begin position="134"/>
        <end position="234"/>
    </location>
</feature>
<feature type="region of interest" description="Disordered" evidence="3">
    <location>
        <begin position="389"/>
        <end position="416"/>
    </location>
</feature>
<feature type="region of interest" description="Disordered" evidence="3">
    <location>
        <begin position="432"/>
        <end position="486"/>
    </location>
</feature>
<feature type="short sequence motif" description="WSXWS motif">
    <location>
        <begin position="220"/>
        <end position="224"/>
    </location>
</feature>
<feature type="short sequence motif" description="Box 1 motif">
    <location>
        <begin position="278"/>
        <end position="286"/>
    </location>
</feature>
<feature type="glycosylation site" description="N-linked (GlcNAc...) asparagine" evidence="1">
    <location>
        <position position="29"/>
    </location>
</feature>
<feature type="glycosylation site" description="N-linked (GlcNAc...) asparagine" evidence="7">
    <location>
        <position position="43"/>
    </location>
</feature>
<feature type="glycosylation site" description="N-linked (GlcNAc...) asparagine" evidence="7">
    <location>
        <position position="71"/>
    </location>
</feature>
<feature type="glycosylation site" description="N-linked (GlcNAc...) asparagine" evidence="6 7">
    <location>
        <position position="149"/>
    </location>
</feature>
<feature type="disulfide bond">
    <location>
        <begin position="36"/>
        <end position="46"/>
    </location>
</feature>
<feature type="disulfide bond">
    <location>
        <begin position="59"/>
        <end position="110"/>
    </location>
</feature>
<feature type="disulfide bond">
    <location>
        <begin position="74"/>
        <end position="86"/>
    </location>
</feature>
<feature type="sequence variant" id="VAR_061186" description="In dbSNP:rs57770674.">
    <original>L</original>
    <variation>V</variation>
    <location>
        <position position="10"/>
    </location>
</feature>
<feature type="sequence variant" id="VAR_083103" description="In IMD63; dbSNP:rs934523851." evidence="9">
    <original>L</original>
    <variation>P</variation>
    <location>
        <position position="77"/>
    </location>
</feature>
<feature type="sequence variant" id="VAR_021994" description="In dbSNP:rs2228143." evidence="11">
    <original>S</original>
    <variation>F</variation>
    <location>
        <position position="83"/>
    </location>
</feature>
<feature type="sequence variant" id="VAR_083104" description="In IMD63; decreased protein abundance; changed IL-2 and IL-15 signaling pathways; plasma levels of both IL2 and IL15 were increased; associated with increased amounts of phosphorylated STAT5A." evidence="8">
    <location>
        <begin position="222"/>
        <end position="224"/>
    </location>
</feature>
<feature type="sequence variant" id="VAR_019998" description="In dbSNP:rs228942." evidence="11">
    <original>D</original>
    <variation>E</variation>
    <location>
        <position position="391"/>
    </location>
</feature>
<feature type="mutagenesis site" description="Partial loss of interaction with SHB; when associated with F-536." evidence="4">
    <original>Y</original>
    <variation>F</variation>
    <location>
        <position position="418"/>
    </location>
</feature>
<feature type="mutagenesis site" description="Partial loss of interaction with SHB; when associated with F-418." evidence="4">
    <original>Y</original>
    <variation>F</variation>
    <location>
        <position position="536"/>
    </location>
</feature>
<feature type="strand" evidence="15">
    <location>
        <begin position="33"/>
        <end position="38"/>
    </location>
</feature>
<feature type="strand" evidence="15">
    <location>
        <begin position="40"/>
        <end position="49"/>
    </location>
</feature>
<feature type="strand" evidence="14">
    <location>
        <begin position="51"/>
        <end position="53"/>
    </location>
</feature>
<feature type="strand" evidence="15">
    <location>
        <begin position="59"/>
        <end position="65"/>
    </location>
</feature>
<feature type="strand" evidence="15">
    <location>
        <begin position="72"/>
        <end position="75"/>
    </location>
</feature>
<feature type="strand" evidence="15">
    <location>
        <begin position="77"/>
        <end position="89"/>
    </location>
</feature>
<feature type="strand" evidence="15">
    <location>
        <begin position="104"/>
        <end position="112"/>
    </location>
</feature>
<feature type="strand" evidence="15">
    <location>
        <begin position="115"/>
        <end position="124"/>
    </location>
</feature>
<feature type="helix" evidence="15">
    <location>
        <begin position="126"/>
        <end position="128"/>
    </location>
</feature>
<feature type="strand" evidence="15">
    <location>
        <begin position="136"/>
        <end position="143"/>
    </location>
</feature>
<feature type="strand" evidence="15">
    <location>
        <begin position="148"/>
        <end position="153"/>
    </location>
</feature>
<feature type="helix" evidence="15">
    <location>
        <begin position="159"/>
        <end position="162"/>
    </location>
</feature>
<feature type="strand" evidence="15">
    <location>
        <begin position="164"/>
        <end position="172"/>
    </location>
</feature>
<feature type="turn" evidence="14">
    <location>
        <begin position="178"/>
        <end position="180"/>
    </location>
</feature>
<feature type="strand" evidence="15">
    <location>
        <begin position="183"/>
        <end position="186"/>
    </location>
</feature>
<feature type="strand" evidence="15">
    <location>
        <begin position="191"/>
        <end position="195"/>
    </location>
</feature>
<feature type="strand" evidence="15">
    <location>
        <begin position="203"/>
        <end position="212"/>
    </location>
</feature>
<feature type="strand" evidence="15">
    <location>
        <begin position="227"/>
        <end position="230"/>
    </location>
</feature>
<gene>
    <name evidence="13" type="primary">IL2RB</name>
    <name evidence="13" type="synonym">IL15RB</name>
</gene>
<evidence type="ECO:0000255" key="1"/>
<evidence type="ECO:0000255" key="2">
    <source>
        <dbReference type="PROSITE-ProRule" id="PRU00316"/>
    </source>
</evidence>
<evidence type="ECO:0000256" key="3">
    <source>
        <dbReference type="SAM" id="MobiDB-lite"/>
    </source>
</evidence>
<evidence type="ECO:0000269" key="4">
    <source>
    </source>
</evidence>
<evidence type="ECO:0000269" key="5">
    <source>
    </source>
</evidence>
<evidence type="ECO:0000269" key="6">
    <source>
    </source>
</evidence>
<evidence type="ECO:0000269" key="7">
    <source>
    </source>
</evidence>
<evidence type="ECO:0000269" key="8">
    <source>
    </source>
</evidence>
<evidence type="ECO:0000269" key="9">
    <source>
    </source>
</evidence>
<evidence type="ECO:0000269" key="10">
    <source>
    </source>
</evidence>
<evidence type="ECO:0000269" key="11">
    <source ref="3"/>
</evidence>
<evidence type="ECO:0000305" key="12"/>
<evidence type="ECO:0000312" key="13">
    <source>
        <dbReference type="HGNC" id="HGNC:6009"/>
    </source>
</evidence>
<evidence type="ECO:0007829" key="14">
    <source>
        <dbReference type="PDB" id="5M5E"/>
    </source>
</evidence>
<evidence type="ECO:0007829" key="15">
    <source>
        <dbReference type="PDB" id="7S2S"/>
    </source>
</evidence>
<name>IL2RB_HUMAN</name>
<sequence>MAAPALSWRLPLLILLLPLATSWASAAVNGTSQFTCFYNSRANISCVWSQDGALQDTSCQVHAWPDRRRWNQTCELLPVSQASWACNLILGAPDSQKLTTVDIVTLRVLCREGVRWRVMAIQDFKPFENLRLMAPISLQVVHVETHRCNISWEISQASHYFERHLEFEARTLSPGHTWEEAPLLTLKQKQEWICLETLTPDTQYEFQVRVKPLQGEFTTWSPWSQPLAFRTKPAALGKDTIPWLGHLLVGLSGAFGFIILVYLLINCRNTGPWLKKVLKCNTPDPSKFFSQLSSEHGGDVQKWLSSPFPSSSFSPGGLAPEISPLEVLERDKVTQLLLQQDKVPEPASLSSNHSLTSCFTNQGYFFFHLPDALEIEACQVYFTYDPYSEEDPDEGVAGAPTGSSPQPLQPLSGEDDAYCTFPSRDDLLLFSPSLLGGPSPPSTAPGGSGAGEERMPPSLQERVPRDWDPQPLGPPTPGVPDLVDFQPPPELVLREAGEEVPDAGPREGVSFPWSRPPGQGEFRALNARLPLNTDAYLSLQELQGQDPTHLV</sequence>
<keyword id="KW-0002">3D-structure</keyword>
<keyword id="KW-1003">Cell membrane</keyword>
<keyword id="KW-0225">Disease variant</keyword>
<keyword id="KW-1015">Disulfide bond</keyword>
<keyword id="KW-0325">Glycoprotein</keyword>
<keyword id="KW-0945">Host-virus interaction</keyword>
<keyword id="KW-0472">Membrane</keyword>
<keyword id="KW-1267">Proteomics identification</keyword>
<keyword id="KW-0675">Receptor</keyword>
<keyword id="KW-1185">Reference proteome</keyword>
<keyword id="KW-0732">Signal</keyword>
<keyword id="KW-0812">Transmembrane</keyword>
<keyword id="KW-1133">Transmembrane helix</keyword>
<organism>
    <name type="scientific">Homo sapiens</name>
    <name type="common">Human</name>
    <dbReference type="NCBI Taxonomy" id="9606"/>
    <lineage>
        <taxon>Eukaryota</taxon>
        <taxon>Metazoa</taxon>
        <taxon>Chordata</taxon>
        <taxon>Craniata</taxon>
        <taxon>Vertebrata</taxon>
        <taxon>Euteleostomi</taxon>
        <taxon>Mammalia</taxon>
        <taxon>Eutheria</taxon>
        <taxon>Euarchontoglires</taxon>
        <taxon>Primates</taxon>
        <taxon>Haplorrhini</taxon>
        <taxon>Catarrhini</taxon>
        <taxon>Hominidae</taxon>
        <taxon>Homo</taxon>
    </lineage>
</organism>
<dbReference type="EMBL" id="M26062">
    <property type="protein sequence ID" value="AAA59143.1"/>
    <property type="molecule type" value="mRNA"/>
</dbReference>
<dbReference type="EMBL" id="CR456506">
    <property type="protein sequence ID" value="CAG30392.1"/>
    <property type="molecule type" value="mRNA"/>
</dbReference>
<dbReference type="EMBL" id="AF517934">
    <property type="protein sequence ID" value="AAM54040.1"/>
    <property type="molecule type" value="Genomic_DNA"/>
</dbReference>
<dbReference type="EMBL" id="AK312860">
    <property type="protein sequence ID" value="BAG35712.1"/>
    <property type="molecule type" value="mRNA"/>
</dbReference>
<dbReference type="EMBL" id="AL022314">
    <property type="status" value="NOT_ANNOTATED_CDS"/>
    <property type="molecule type" value="Genomic_DNA"/>
</dbReference>
<dbReference type="EMBL" id="CH471095">
    <property type="protein sequence ID" value="EAW60144.1"/>
    <property type="molecule type" value="Genomic_DNA"/>
</dbReference>
<dbReference type="EMBL" id="BC025691">
    <property type="protein sequence ID" value="AAH25691.1"/>
    <property type="molecule type" value="mRNA"/>
</dbReference>
<dbReference type="CCDS" id="CCDS13942.1"/>
<dbReference type="PIR" id="A30342">
    <property type="entry name" value="A30342"/>
</dbReference>
<dbReference type="RefSeq" id="NP_000869.1">
    <property type="nucleotide sequence ID" value="NM_000878.5"/>
</dbReference>
<dbReference type="RefSeq" id="NP_001333151.1">
    <property type="nucleotide sequence ID" value="NM_001346222.1"/>
</dbReference>
<dbReference type="RefSeq" id="NP_001333152.1">
    <property type="nucleotide sequence ID" value="NM_001346223.2"/>
</dbReference>
<dbReference type="PDB" id="2B5I">
    <property type="method" value="X-ray"/>
    <property type="resolution" value="2.30 A"/>
    <property type="chains" value="B=27-240"/>
</dbReference>
<dbReference type="PDB" id="2ERJ">
    <property type="method" value="X-ray"/>
    <property type="resolution" value="3.00 A"/>
    <property type="chains" value="B/F=27-232"/>
</dbReference>
<dbReference type="PDB" id="3QAZ">
    <property type="method" value="X-ray"/>
    <property type="resolution" value="3.80 A"/>
    <property type="chains" value="B/E/H/K/N/Q/T/W/Z/c/f/i=24-240"/>
</dbReference>
<dbReference type="PDB" id="4GS7">
    <property type="method" value="X-ray"/>
    <property type="resolution" value="2.35 A"/>
    <property type="chains" value="B=27-240"/>
</dbReference>
<dbReference type="PDB" id="5M5E">
    <property type="method" value="X-ray"/>
    <property type="resolution" value="2.30 A"/>
    <property type="chains" value="B=27-240"/>
</dbReference>
<dbReference type="PDB" id="6E8K">
    <property type="method" value="X-ray"/>
    <property type="resolution" value="1.71 A"/>
    <property type="chains" value="B=381-393"/>
</dbReference>
<dbReference type="PDB" id="7S2S">
    <property type="method" value="X-ray"/>
    <property type="resolution" value="1.93 A"/>
    <property type="chains" value="B/D=27-236"/>
</dbReference>
<dbReference type="PDBsum" id="2B5I"/>
<dbReference type="PDBsum" id="2ERJ"/>
<dbReference type="PDBsum" id="3QAZ"/>
<dbReference type="PDBsum" id="4GS7"/>
<dbReference type="PDBsum" id="5M5E"/>
<dbReference type="PDBsum" id="6E8K"/>
<dbReference type="PDBsum" id="7S2S"/>
<dbReference type="SMR" id="P14784"/>
<dbReference type="BioGRID" id="109775">
    <property type="interactions" value="25"/>
</dbReference>
<dbReference type="ComplexPortal" id="CPX-627">
    <property type="entry name" value="Interleukin-15 receptor-ligand complex"/>
</dbReference>
<dbReference type="ComplexPortal" id="CPX-646">
    <property type="entry name" value="Interleukin-2 receptor-ligand complex"/>
</dbReference>
<dbReference type="CORUM" id="P14784"/>
<dbReference type="DIP" id="DIP-43N"/>
<dbReference type="ELM" id="P14784"/>
<dbReference type="FunCoup" id="P14784">
    <property type="interactions" value="998"/>
</dbReference>
<dbReference type="IntAct" id="P14784">
    <property type="interactions" value="8"/>
</dbReference>
<dbReference type="MINT" id="P14784"/>
<dbReference type="STRING" id="9606.ENSP00000216223"/>
<dbReference type="ChEMBL" id="CHEMBL3276"/>
<dbReference type="DrugBank" id="DB00041">
    <property type="generic name" value="Aldesleukin"/>
</dbReference>
<dbReference type="DrugBank" id="DB00074">
    <property type="generic name" value="Basiliximab"/>
</dbReference>
<dbReference type="DrugBank" id="DB00111">
    <property type="generic name" value="Daclizumab"/>
</dbReference>
<dbReference type="DrugBank" id="DB00004">
    <property type="generic name" value="Denileukin diftitox"/>
</dbReference>
<dbReference type="DrugBank" id="DB16479">
    <property type="generic name" value="Inbakicept"/>
</dbReference>
<dbReference type="DrugBank" id="DB18740">
    <property type="generic name" value="Nogapendekin alfa"/>
</dbReference>
<dbReference type="DrugCentral" id="P14784"/>
<dbReference type="GuidetoPHARMACOLOGY" id="1696"/>
<dbReference type="TCDB" id="8.A.152.1.1">
    <property type="family name" value="the interleukin receptor (ilr) family"/>
</dbReference>
<dbReference type="GlyCosmos" id="P14784">
    <property type="glycosylation" value="4 sites, No reported glycans"/>
</dbReference>
<dbReference type="GlyGen" id="P14784">
    <property type="glycosylation" value="5 sites, 5 N-linked glycans (1 site)"/>
</dbReference>
<dbReference type="iPTMnet" id="P14784"/>
<dbReference type="PhosphoSitePlus" id="P14784"/>
<dbReference type="BioMuta" id="IL2RB"/>
<dbReference type="DMDM" id="124321"/>
<dbReference type="MassIVE" id="P14784"/>
<dbReference type="PaxDb" id="9606-ENSP00000216223"/>
<dbReference type="PeptideAtlas" id="P14784"/>
<dbReference type="ProteomicsDB" id="53083"/>
<dbReference type="ABCD" id="P14784">
    <property type="antibodies" value="2 sequenced antibodies"/>
</dbReference>
<dbReference type="Antibodypedia" id="11905">
    <property type="antibodies" value="1011 antibodies from 43 providers"/>
</dbReference>
<dbReference type="DNASU" id="3560"/>
<dbReference type="Ensembl" id="ENST00000216223.10">
    <property type="protein sequence ID" value="ENSP00000216223.5"/>
    <property type="gene ID" value="ENSG00000100385.15"/>
</dbReference>
<dbReference type="Ensembl" id="ENST00000429622.6">
    <property type="protein sequence ID" value="ENSP00000402685.2"/>
    <property type="gene ID" value="ENSG00000100385.15"/>
</dbReference>
<dbReference type="Ensembl" id="ENST00000445595.2">
    <property type="protein sequence ID" value="ENSP00000401020.2"/>
    <property type="gene ID" value="ENSG00000100385.15"/>
</dbReference>
<dbReference type="Ensembl" id="ENST00000453962.6">
    <property type="protein sequence ID" value="ENSP00000403731.2"/>
    <property type="gene ID" value="ENSG00000100385.15"/>
</dbReference>
<dbReference type="Ensembl" id="ENST00000698883.1">
    <property type="protein sequence ID" value="ENSP00000514005.1"/>
    <property type="gene ID" value="ENSG00000100385.15"/>
</dbReference>
<dbReference type="Ensembl" id="ENST00000698890.1">
    <property type="protein sequence ID" value="ENSP00000514009.1"/>
    <property type="gene ID" value="ENSG00000100385.15"/>
</dbReference>
<dbReference type="Ensembl" id="ENST00000698892.1">
    <property type="protein sequence ID" value="ENSP00000514011.1"/>
    <property type="gene ID" value="ENSG00000100385.15"/>
</dbReference>
<dbReference type="Ensembl" id="ENST00000698893.1">
    <property type="protein sequence ID" value="ENSP00000514012.1"/>
    <property type="gene ID" value="ENSG00000100385.15"/>
</dbReference>
<dbReference type="GeneID" id="3560"/>
<dbReference type="KEGG" id="hsa:3560"/>
<dbReference type="MANE-Select" id="ENST00000216223.10">
    <property type="protein sequence ID" value="ENSP00000216223.5"/>
    <property type="RefSeq nucleotide sequence ID" value="NM_000878.5"/>
    <property type="RefSeq protein sequence ID" value="NP_000869.1"/>
</dbReference>
<dbReference type="UCSC" id="uc003aqv.2">
    <property type="organism name" value="human"/>
</dbReference>
<dbReference type="AGR" id="HGNC:6009"/>
<dbReference type="CTD" id="3560"/>
<dbReference type="DisGeNET" id="3560"/>
<dbReference type="GeneCards" id="IL2RB"/>
<dbReference type="HGNC" id="HGNC:6009">
    <property type="gene designation" value="IL2RB"/>
</dbReference>
<dbReference type="HPA" id="ENSG00000100385">
    <property type="expression patterns" value="Tissue enhanced (bone marrow, lymphoid tissue)"/>
</dbReference>
<dbReference type="MalaCards" id="IL2RB"/>
<dbReference type="MIM" id="146710">
    <property type="type" value="gene"/>
</dbReference>
<dbReference type="MIM" id="618495">
    <property type="type" value="phenotype"/>
</dbReference>
<dbReference type="neXtProt" id="NX_P14784"/>
<dbReference type="OpenTargets" id="ENSG00000100385"/>
<dbReference type="Orphanet" id="85410">
    <property type="disease" value="Oligoarticular juvenile idiopathic arthritis"/>
</dbReference>
<dbReference type="Orphanet" id="85408">
    <property type="disease" value="Rheumatoid factor-negative polyarticular juvenile idiopathic arthritis"/>
</dbReference>
<dbReference type="PharmGKB" id="PA29829"/>
<dbReference type="VEuPathDB" id="HostDB:ENSG00000100385"/>
<dbReference type="eggNOG" id="ENOG502S0MR">
    <property type="taxonomic scope" value="Eukaryota"/>
</dbReference>
<dbReference type="GeneTree" id="ENSGT00510000049239"/>
<dbReference type="HOGENOM" id="CLU_035782_1_0_1"/>
<dbReference type="InParanoid" id="P14784"/>
<dbReference type="OMA" id="QTSCFTN"/>
<dbReference type="OrthoDB" id="9419853at2759"/>
<dbReference type="PAN-GO" id="P14784">
    <property type="GO annotations" value="5 GO annotations based on evolutionary models"/>
</dbReference>
<dbReference type="PhylomeDB" id="P14784"/>
<dbReference type="TreeFam" id="TF337874"/>
<dbReference type="PathwayCommons" id="P14784"/>
<dbReference type="Reactome" id="R-HSA-5673001">
    <property type="pathway name" value="RAF/MAP kinase cascade"/>
</dbReference>
<dbReference type="Reactome" id="R-HSA-8983432">
    <property type="pathway name" value="Interleukin-15 signaling"/>
</dbReference>
<dbReference type="Reactome" id="R-HSA-9020558">
    <property type="pathway name" value="Interleukin-2 signaling"/>
</dbReference>
<dbReference type="Reactome" id="R-HSA-912526">
    <property type="pathway name" value="Interleukin receptor SHC signaling"/>
</dbReference>
<dbReference type="SignaLink" id="P14784"/>
<dbReference type="SIGNOR" id="P14784"/>
<dbReference type="BioGRID-ORCS" id="3560">
    <property type="hits" value="11 hits in 1153 CRISPR screens"/>
</dbReference>
<dbReference type="ChiTaRS" id="IL2RB">
    <property type="organism name" value="human"/>
</dbReference>
<dbReference type="EvolutionaryTrace" id="P14784"/>
<dbReference type="GeneWiki" id="IL2RB"/>
<dbReference type="GenomeRNAi" id="3560"/>
<dbReference type="Pharos" id="P14784">
    <property type="development level" value="Tclin"/>
</dbReference>
<dbReference type="PRO" id="PR:P14784"/>
<dbReference type="Proteomes" id="UP000005640">
    <property type="component" value="Chromosome 22"/>
</dbReference>
<dbReference type="RNAct" id="P14784">
    <property type="molecule type" value="protein"/>
</dbReference>
<dbReference type="Bgee" id="ENSG00000100385">
    <property type="expression patterns" value="Expressed in granulocyte and 154 other cell types or tissues"/>
</dbReference>
<dbReference type="ExpressionAtlas" id="P14784">
    <property type="expression patterns" value="baseline and differential"/>
</dbReference>
<dbReference type="GO" id="GO:0009986">
    <property type="term" value="C:cell surface"/>
    <property type="evidence" value="ECO:0000314"/>
    <property type="project" value="UniProtKB"/>
</dbReference>
<dbReference type="GO" id="GO:0005829">
    <property type="term" value="C:cytosol"/>
    <property type="evidence" value="ECO:0000304"/>
    <property type="project" value="Reactome"/>
</dbReference>
<dbReference type="GO" id="GO:0005768">
    <property type="term" value="C:endosome"/>
    <property type="evidence" value="ECO:0000304"/>
    <property type="project" value="Reactome"/>
</dbReference>
<dbReference type="GO" id="GO:0009897">
    <property type="term" value="C:external side of plasma membrane"/>
    <property type="evidence" value="ECO:0000250"/>
    <property type="project" value="UniProtKB"/>
</dbReference>
<dbReference type="GO" id="GO:0005893">
    <property type="term" value="C:interleukin-2 receptor complex"/>
    <property type="evidence" value="ECO:0000304"/>
    <property type="project" value="UniProtKB"/>
</dbReference>
<dbReference type="GO" id="GO:0016020">
    <property type="term" value="C:membrane"/>
    <property type="evidence" value="ECO:0007005"/>
    <property type="project" value="UniProtKB"/>
</dbReference>
<dbReference type="GO" id="GO:0005886">
    <property type="term" value="C:plasma membrane"/>
    <property type="evidence" value="ECO:0000315"/>
    <property type="project" value="UniProtKB"/>
</dbReference>
<dbReference type="GO" id="GO:0015026">
    <property type="term" value="F:coreceptor activity"/>
    <property type="evidence" value="ECO:0000314"/>
    <property type="project" value="UniProt"/>
</dbReference>
<dbReference type="GO" id="GO:0004896">
    <property type="term" value="F:cytokine receptor activity"/>
    <property type="evidence" value="ECO:0000318"/>
    <property type="project" value="GO_Central"/>
</dbReference>
<dbReference type="GO" id="GO:0042010">
    <property type="term" value="F:interleukin-15 receptor activity"/>
    <property type="evidence" value="ECO:0000314"/>
    <property type="project" value="UniProtKB"/>
</dbReference>
<dbReference type="GO" id="GO:0019976">
    <property type="term" value="F:interleukin-2 binding"/>
    <property type="evidence" value="ECO:0000315"/>
    <property type="project" value="UniProtKB"/>
</dbReference>
<dbReference type="GO" id="GO:0004911">
    <property type="term" value="F:interleukin-2 receptor activity"/>
    <property type="evidence" value="ECO:0000314"/>
    <property type="project" value="MGI"/>
</dbReference>
<dbReference type="GO" id="GO:0019221">
    <property type="term" value="P:cytokine-mediated signaling pathway"/>
    <property type="evidence" value="ECO:0000314"/>
    <property type="project" value="MGI"/>
</dbReference>
<dbReference type="GO" id="GO:0016064">
    <property type="term" value="P:immunoglobulin mediated immune response"/>
    <property type="evidence" value="ECO:0000318"/>
    <property type="project" value="GO_Central"/>
</dbReference>
<dbReference type="GO" id="GO:0035723">
    <property type="term" value="P:interleukin-15-mediated signaling pathway"/>
    <property type="evidence" value="ECO:0000315"/>
    <property type="project" value="UniProtKB"/>
</dbReference>
<dbReference type="GO" id="GO:0038110">
    <property type="term" value="P:interleukin-2-mediated signaling pathway"/>
    <property type="evidence" value="ECO:0000314"/>
    <property type="project" value="UniProt"/>
</dbReference>
<dbReference type="GO" id="GO:0043066">
    <property type="term" value="P:negative regulation of apoptotic process"/>
    <property type="evidence" value="ECO:0000314"/>
    <property type="project" value="MGI"/>
</dbReference>
<dbReference type="GO" id="GO:0050766">
    <property type="term" value="P:positive regulation of phagocytosis"/>
    <property type="evidence" value="ECO:0000315"/>
    <property type="project" value="UniProtKB"/>
</dbReference>
<dbReference type="GO" id="GO:0065003">
    <property type="term" value="P:protein-containing complex assembly"/>
    <property type="evidence" value="ECO:0000304"/>
    <property type="project" value="ProtInc"/>
</dbReference>
<dbReference type="GO" id="GO:0007165">
    <property type="term" value="P:signal transduction"/>
    <property type="evidence" value="ECO:0000304"/>
    <property type="project" value="ProtInc"/>
</dbReference>
<dbReference type="CDD" id="cd00063">
    <property type="entry name" value="FN3"/>
    <property type="match status" value="1"/>
</dbReference>
<dbReference type="FunFam" id="2.60.40.10:FF:001769">
    <property type="entry name" value="Interleukin-2 receptor subunit beta"/>
    <property type="match status" value="1"/>
</dbReference>
<dbReference type="FunFam" id="2.60.40.10:FF:001830">
    <property type="entry name" value="Interleukin-2 receptor subunit beta"/>
    <property type="match status" value="1"/>
</dbReference>
<dbReference type="Gene3D" id="2.60.40.10">
    <property type="entry name" value="Immunoglobulins"/>
    <property type="match status" value="2"/>
</dbReference>
<dbReference type="InterPro" id="IPR003961">
    <property type="entry name" value="FN3_dom"/>
</dbReference>
<dbReference type="InterPro" id="IPR036116">
    <property type="entry name" value="FN3_sf"/>
</dbReference>
<dbReference type="InterPro" id="IPR003531">
    <property type="entry name" value="Hempt_rcpt_S_F1_CS"/>
</dbReference>
<dbReference type="InterPro" id="IPR013783">
    <property type="entry name" value="Ig-like_fold"/>
</dbReference>
<dbReference type="InterPro" id="IPR040951">
    <property type="entry name" value="IL2RB_N1"/>
</dbReference>
<dbReference type="PANTHER" id="PTHR23037">
    <property type="entry name" value="CYTOKINE RECEPTOR"/>
    <property type="match status" value="1"/>
</dbReference>
<dbReference type="PANTHER" id="PTHR23037:SF30">
    <property type="entry name" value="INTERLEUKIN-2 RECEPTOR SUBUNIT BETA"/>
    <property type="match status" value="1"/>
</dbReference>
<dbReference type="Pfam" id="PF18707">
    <property type="entry name" value="IL2RB_N1"/>
    <property type="match status" value="1"/>
</dbReference>
<dbReference type="SMART" id="SM00060">
    <property type="entry name" value="FN3"/>
    <property type="match status" value="1"/>
</dbReference>
<dbReference type="SUPFAM" id="SSF49265">
    <property type="entry name" value="Fibronectin type III"/>
    <property type="match status" value="2"/>
</dbReference>
<dbReference type="PROSITE" id="PS50853">
    <property type="entry name" value="FN3"/>
    <property type="match status" value="1"/>
</dbReference>
<dbReference type="PROSITE" id="PS01355">
    <property type="entry name" value="HEMATOPO_REC_S_F1"/>
    <property type="match status" value="1"/>
</dbReference>